<evidence type="ECO:0000250" key="1">
    <source>
        <dbReference type="UniProtKB" id="P08050"/>
    </source>
</evidence>
<evidence type="ECO:0000250" key="2">
    <source>
        <dbReference type="UniProtKB" id="P17302"/>
    </source>
</evidence>
<evidence type="ECO:0000250" key="3">
    <source>
        <dbReference type="UniProtKB" id="P23242"/>
    </source>
</evidence>
<evidence type="ECO:0000250" key="4">
    <source>
        <dbReference type="UniProtKB" id="Q6TYA7"/>
    </source>
</evidence>
<evidence type="ECO:0000255" key="5"/>
<evidence type="ECO:0000256" key="6">
    <source>
        <dbReference type="SAM" id="MobiDB-lite"/>
    </source>
</evidence>
<evidence type="ECO:0000305" key="7"/>
<protein>
    <recommendedName>
        <fullName>Gap junction alpha-1 protein</fullName>
    </recommendedName>
    <alternativeName>
        <fullName>Connexin-43</fullName>
        <shortName>Cx43</shortName>
    </alternativeName>
</protein>
<reference key="1">
    <citation type="journal article" date="2007" name="DNA Seq.">
        <title>Cloning, sequence analysis and phylogeny of connexin43 isolated from American black bear heart.</title>
        <authorList>
            <person name="Van Der Heyden M.A."/>
            <person name="Kok B."/>
            <person name="Kouwenhoven E.N."/>
            <person name="Toien O."/>
            <person name="Barnes B.M."/>
            <person name="Fedorov V.G."/>
            <person name="Efimov I.R."/>
            <person name="Opthof T."/>
        </authorList>
    </citation>
    <scope>NUCLEOTIDE SEQUENCE [MRNA]</scope>
    <source>
        <tissue>Heart</tissue>
    </source>
</reference>
<proteinExistence type="evidence at transcript level"/>
<organism>
    <name type="scientific">Ursus americanus</name>
    <name type="common">American black bear</name>
    <name type="synonym">Euarctos americanus</name>
    <dbReference type="NCBI Taxonomy" id="9643"/>
    <lineage>
        <taxon>Eukaryota</taxon>
        <taxon>Metazoa</taxon>
        <taxon>Chordata</taxon>
        <taxon>Craniata</taxon>
        <taxon>Vertebrata</taxon>
        <taxon>Euteleostomi</taxon>
        <taxon>Mammalia</taxon>
        <taxon>Eutheria</taxon>
        <taxon>Laurasiatheria</taxon>
        <taxon>Carnivora</taxon>
        <taxon>Caniformia</taxon>
        <taxon>Ursidae</taxon>
        <taxon>Ursus</taxon>
    </lineage>
</organism>
<accession>A6XKM2</accession>
<dbReference type="EMBL" id="DQ833440">
    <property type="protein sequence ID" value="ABI17846.1"/>
    <property type="molecule type" value="mRNA"/>
</dbReference>
<dbReference type="RefSeq" id="XP_045654530.1">
    <property type="nucleotide sequence ID" value="XM_045798574.1"/>
</dbReference>
<dbReference type="BMRB" id="A6XKM2"/>
<dbReference type="SMR" id="A6XKM2"/>
<dbReference type="STRING" id="9643.ENSUAMP00000035327"/>
<dbReference type="Ensembl" id="ENSUAMT00000039323.1">
    <property type="protein sequence ID" value="ENSUAMP00000035327.1"/>
    <property type="gene ID" value="ENSUAMG00000026820.1"/>
</dbReference>
<dbReference type="GeneID" id="123793004"/>
<dbReference type="GeneTree" id="ENSGT01090000260070"/>
<dbReference type="OMA" id="FWVLQFI"/>
<dbReference type="Proteomes" id="UP000291022">
    <property type="component" value="Unassembled WGS sequence"/>
</dbReference>
<dbReference type="GO" id="GO:0016324">
    <property type="term" value="C:apical plasma membrane"/>
    <property type="evidence" value="ECO:0000250"/>
    <property type="project" value="UniProtKB"/>
</dbReference>
<dbReference type="GO" id="GO:0030054">
    <property type="term" value="C:cell junction"/>
    <property type="evidence" value="ECO:0000250"/>
    <property type="project" value="UniProtKB"/>
</dbReference>
<dbReference type="GO" id="GO:0005922">
    <property type="term" value="C:connexin complex"/>
    <property type="evidence" value="ECO:0000250"/>
    <property type="project" value="UniProtKB"/>
</dbReference>
<dbReference type="GO" id="GO:0005783">
    <property type="term" value="C:endoplasmic reticulum"/>
    <property type="evidence" value="ECO:0007669"/>
    <property type="project" value="UniProtKB-SubCell"/>
</dbReference>
<dbReference type="GO" id="GO:0014704">
    <property type="term" value="C:intercalated disc"/>
    <property type="evidence" value="ECO:0000250"/>
    <property type="project" value="UniProtKB"/>
</dbReference>
<dbReference type="GO" id="GO:0005739">
    <property type="term" value="C:mitochondrion"/>
    <property type="evidence" value="ECO:0000250"/>
    <property type="project" value="UniProtKB"/>
</dbReference>
<dbReference type="GO" id="GO:0005654">
    <property type="term" value="C:nucleoplasm"/>
    <property type="evidence" value="ECO:0007669"/>
    <property type="project" value="Ensembl"/>
</dbReference>
<dbReference type="GO" id="GO:0005886">
    <property type="term" value="C:plasma membrane"/>
    <property type="evidence" value="ECO:0000250"/>
    <property type="project" value="UniProtKB"/>
</dbReference>
<dbReference type="GO" id="GO:0070160">
    <property type="term" value="C:tight junction"/>
    <property type="evidence" value="ECO:0007669"/>
    <property type="project" value="Ensembl"/>
</dbReference>
<dbReference type="GO" id="GO:0008013">
    <property type="term" value="F:beta-catenin binding"/>
    <property type="evidence" value="ECO:0007669"/>
    <property type="project" value="Ensembl"/>
</dbReference>
<dbReference type="GO" id="GO:1903763">
    <property type="term" value="F:gap junction channel activity involved in cell communication by electrical coupling"/>
    <property type="evidence" value="ECO:0007669"/>
    <property type="project" value="Ensembl"/>
</dbReference>
<dbReference type="GO" id="GO:0055077">
    <property type="term" value="F:gap junction hemi-channel activity"/>
    <property type="evidence" value="ECO:0000250"/>
    <property type="project" value="UniProtKB"/>
</dbReference>
<dbReference type="GO" id="GO:0015075">
    <property type="term" value="F:monoatomic ion transmembrane transporter activity"/>
    <property type="evidence" value="ECO:0007669"/>
    <property type="project" value="Ensembl"/>
</dbReference>
<dbReference type="GO" id="GO:0015631">
    <property type="term" value="F:tubulin binding"/>
    <property type="evidence" value="ECO:0007669"/>
    <property type="project" value="Ensembl"/>
</dbReference>
<dbReference type="GO" id="GO:0007267">
    <property type="term" value="P:cell-cell signaling"/>
    <property type="evidence" value="ECO:0007669"/>
    <property type="project" value="Ensembl"/>
</dbReference>
<dbReference type="GO" id="GO:0000132">
    <property type="term" value="P:establishment of mitotic spindle orientation"/>
    <property type="evidence" value="ECO:0007669"/>
    <property type="project" value="Ensembl"/>
</dbReference>
<dbReference type="GO" id="GO:0007507">
    <property type="term" value="P:heart development"/>
    <property type="evidence" value="ECO:0007669"/>
    <property type="project" value="InterPro"/>
</dbReference>
<dbReference type="GO" id="GO:0099111">
    <property type="term" value="P:microtubule-based transport"/>
    <property type="evidence" value="ECO:0000250"/>
    <property type="project" value="UniProtKB"/>
</dbReference>
<dbReference type="GO" id="GO:0030308">
    <property type="term" value="P:negative regulation of cell growth"/>
    <property type="evidence" value="ECO:0000250"/>
    <property type="project" value="UniProtKB"/>
</dbReference>
<dbReference type="GO" id="GO:0032277">
    <property type="term" value="P:negative regulation of gonadotropin secretion"/>
    <property type="evidence" value="ECO:0007669"/>
    <property type="project" value="Ensembl"/>
</dbReference>
<dbReference type="GO" id="GO:1901164">
    <property type="term" value="P:negative regulation of trophoblast cell migration"/>
    <property type="evidence" value="ECO:0007669"/>
    <property type="project" value="Ensembl"/>
</dbReference>
<dbReference type="GO" id="GO:0010628">
    <property type="term" value="P:positive regulation of gene expression"/>
    <property type="evidence" value="ECO:0007669"/>
    <property type="project" value="Ensembl"/>
</dbReference>
<dbReference type="GO" id="GO:1905772">
    <property type="term" value="P:positive regulation of mesodermal cell differentiation"/>
    <property type="evidence" value="ECO:0007669"/>
    <property type="project" value="Ensembl"/>
</dbReference>
<dbReference type="GO" id="GO:1905332">
    <property type="term" value="P:positive regulation of morphogenesis of an epithelium"/>
    <property type="evidence" value="ECO:0007669"/>
    <property type="project" value="Ensembl"/>
</dbReference>
<dbReference type="GO" id="GO:2000648">
    <property type="term" value="P:positive regulation of stem cell proliferation"/>
    <property type="evidence" value="ECO:0007669"/>
    <property type="project" value="Ensembl"/>
</dbReference>
<dbReference type="GO" id="GO:1904707">
    <property type="term" value="P:positive regulation of vascular associated smooth muscle cell proliferation"/>
    <property type="evidence" value="ECO:0007669"/>
    <property type="project" value="Ensembl"/>
</dbReference>
<dbReference type="GO" id="GO:0008104">
    <property type="term" value="P:protein localization"/>
    <property type="evidence" value="ECO:0007669"/>
    <property type="project" value="Ensembl"/>
</dbReference>
<dbReference type="GO" id="GO:0007165">
    <property type="term" value="P:signal transduction"/>
    <property type="evidence" value="ECO:0007669"/>
    <property type="project" value="Ensembl"/>
</dbReference>
<dbReference type="FunFam" id="1.20.1440.80:FF:000001">
    <property type="entry name" value="Gap junction alpha-1"/>
    <property type="match status" value="1"/>
</dbReference>
<dbReference type="FunFam" id="1.20.5.1130:FF:000001">
    <property type="entry name" value="Gap junction alpha-1"/>
    <property type="match status" value="1"/>
</dbReference>
<dbReference type="Gene3D" id="1.20.5.1130">
    <property type="entry name" value="Connexin43"/>
    <property type="match status" value="1"/>
</dbReference>
<dbReference type="Gene3D" id="1.20.1440.80">
    <property type="entry name" value="Gap junction channel protein cysteine-rich domain"/>
    <property type="match status" value="1"/>
</dbReference>
<dbReference type="InterPro" id="IPR035091">
    <property type="entry name" value="Alpha_helix_dom_sf"/>
</dbReference>
<dbReference type="InterPro" id="IPR000500">
    <property type="entry name" value="Connexin"/>
</dbReference>
<dbReference type="InterPro" id="IPR002261">
    <property type="entry name" value="Connexin43"/>
</dbReference>
<dbReference type="InterPro" id="IPR013124">
    <property type="entry name" value="Connexin43_C"/>
</dbReference>
<dbReference type="InterPro" id="IPR034634">
    <property type="entry name" value="Connexin_C"/>
</dbReference>
<dbReference type="InterPro" id="IPR019570">
    <property type="entry name" value="Connexin_CCC"/>
</dbReference>
<dbReference type="InterPro" id="IPR017990">
    <property type="entry name" value="Connexin_CS"/>
</dbReference>
<dbReference type="InterPro" id="IPR013092">
    <property type="entry name" value="Connexin_N"/>
</dbReference>
<dbReference type="InterPro" id="IPR038359">
    <property type="entry name" value="Connexin_N_sf"/>
</dbReference>
<dbReference type="PANTHER" id="PTHR11984">
    <property type="entry name" value="CONNEXIN"/>
    <property type="match status" value="1"/>
</dbReference>
<dbReference type="PANTHER" id="PTHR11984:SF33">
    <property type="entry name" value="GAP JUNCTION ALPHA-1 PROTEIN"/>
    <property type="match status" value="1"/>
</dbReference>
<dbReference type="Pfam" id="PF00029">
    <property type="entry name" value="Connexin"/>
    <property type="match status" value="1"/>
</dbReference>
<dbReference type="Pfam" id="PF03508">
    <property type="entry name" value="Connexin43"/>
    <property type="match status" value="1"/>
</dbReference>
<dbReference type="PRINTS" id="PR00206">
    <property type="entry name" value="CONNEXIN"/>
</dbReference>
<dbReference type="PRINTS" id="PR01132">
    <property type="entry name" value="CONNEXINA1"/>
</dbReference>
<dbReference type="SMART" id="SM00037">
    <property type="entry name" value="CNX"/>
    <property type="match status" value="1"/>
</dbReference>
<dbReference type="SMART" id="SM01089">
    <property type="entry name" value="Connexin_CCC"/>
    <property type="match status" value="1"/>
</dbReference>
<dbReference type="SUPFAM" id="SSF118220">
    <property type="entry name" value="Connexin43"/>
    <property type="match status" value="1"/>
</dbReference>
<dbReference type="PROSITE" id="PS00407">
    <property type="entry name" value="CONNEXINS_1"/>
    <property type="match status" value="1"/>
</dbReference>
<dbReference type="PROSITE" id="PS00408">
    <property type="entry name" value="CONNEXINS_2"/>
    <property type="match status" value="1"/>
</dbReference>
<name>CXA1_URSAM</name>
<gene>
    <name type="primary">GJA1</name>
</gene>
<comment type="function">
    <text evidence="1 3">Gap junction protein that acts as a regulator of bladder capacity. A gap junction consists of a cluster of closely packed pairs of transmembrane channels, the connexons, through which materials of low MW diffuse from one cell to a neighboring cell. May play a critical role in the physiology of hearing by participating in the recycling of potassium to the cochlear endolymph. Negative regulator of bladder functional capacity: acts by enhancing intercellular electrical and chemical transmission, thus sensitizing bladder muscles to cholinergic neural stimuli and causing them to contract. May play a role in cell growth inhibition through the regulation of NOV expression and localization. Plays an essential role in gap junction communication in the ventricles (By similarity).</text>
</comment>
<comment type="subunit">
    <text evidence="1 2 3">A connexon is composed of a hexamer of connexins. Interacts with SGSM3 (By similarity). Interacts with RIC1/CIP150 (By similarity). Interacts with CNST and CSNK1D (By similarity). Interacts (via C-terminus) with TJP1. Interacts (via C-terminus) with SRC (via SH3 domain). Interacts (not ubiquitinated) with UBQLN4 (via UBA domain) (By similarity). Interacts with NOV. Interacts with TMEM65 (By similarity). Interacts with ANK3/ANKG and PKP2 (By similarity).</text>
</comment>
<comment type="subcellular location">
    <subcellularLocation>
        <location evidence="2">Cell membrane</location>
        <topology evidence="5">Multi-pass membrane protein</topology>
    </subcellularLocation>
    <subcellularLocation>
        <location evidence="2">Cell junction</location>
        <location evidence="2">Gap junction</location>
    </subcellularLocation>
    <subcellularLocation>
        <location evidence="3">Endoplasmic reticulum</location>
    </subcellularLocation>
    <text evidence="3">Localizes at the intercalated disk (ICD) in cardiomyocytes and proper localization at ICD is dependent on TMEM65.</text>
</comment>
<comment type="PTM">
    <text evidence="1 2 4">Phosphorylation at Ser-325, Ser-328 and Ser-330 by CK1 modulates gap junction assembly. Phosphorylated at Ser-368 by PRKCG; phosphorylation induces disassembly of gap junction plaques and inhibition of gap junction activity. Phosphorylation at Ser-368 by PRKCD triggers its internalization into small vesicles leading to proteasome-mediated degradation (By similarity).</text>
</comment>
<comment type="PTM">
    <text evidence="2">Sumoylated with SUMO1, SUMO2 and SUMO3, which may regulate the level of functional Cx43 gap junctions at the plasma membrane. May be desumoylated by SENP1 or SENP2 (By similarity).</text>
</comment>
<comment type="PTM">
    <text evidence="3">S-nitrosylation at Cys-271 is enriched at the muscle endothelial gap junction in arteries, it augments channel permeability and may regulate of smooth muscle cell to endothelial cell communication.</text>
</comment>
<comment type="PTM">
    <text evidence="3">Acetylated in the developing cortex; leading to delocalization from the cell membrane.</text>
</comment>
<comment type="similarity">
    <text evidence="7">Belongs to the connexin family. Alpha-type (group II) subfamily.</text>
</comment>
<sequence length="382" mass="43063">MGDWSALGKLLDKVQAYSTAGGKVWLSVLFIFRILLLGTAVESAWGDEQSAFRCNTQQPGCENVCYDKSFPISHVRFWVLQIIFVSVPTLLYLAHVFYVMRKEEKLNKKEEELKVAQTDGVNVEMHLKQIEIKKFKYGIEEHGKVKMRGGLLRTYIISILFKSVFEVAFLLIQWYIYGFSLSAVYTCKRDPCPHQVDCFLSRPTEKTIFIIFMLVVSLVSLALNIIELFYVFFKGVKDRVKGKSDPYHATTGPLSPSKDCGSPKYAYFNGCSSPTAPLSPMSPPGYKLVTGDRNNSSCRNYNKQASEQNWANYSAEQNRMGQAGSTISNSHAQPFDFPDDNQNSKKLATGHELQPLAIVDQRPSSRASSRASSRPRPDDLEI</sequence>
<feature type="initiator methionine" description="Removed" evidence="1">
    <location>
        <position position="1"/>
    </location>
</feature>
<feature type="chain" id="PRO_0000313002" description="Gap junction alpha-1 protein">
    <location>
        <begin position="2"/>
        <end position="382"/>
    </location>
</feature>
<feature type="topological domain" description="Cytoplasmic" evidence="1">
    <location>
        <begin position="2"/>
        <end position="23"/>
    </location>
</feature>
<feature type="transmembrane region" description="Helical" evidence="5">
    <location>
        <begin position="24"/>
        <end position="44"/>
    </location>
</feature>
<feature type="topological domain" description="Extracellular" evidence="1">
    <location>
        <begin position="45"/>
        <end position="76"/>
    </location>
</feature>
<feature type="transmembrane region" description="Helical" evidence="5">
    <location>
        <begin position="77"/>
        <end position="97"/>
    </location>
</feature>
<feature type="topological domain" description="Cytoplasmic" evidence="1">
    <location>
        <begin position="98"/>
        <end position="155"/>
    </location>
</feature>
<feature type="transmembrane region" description="Helical" evidence="5">
    <location>
        <begin position="156"/>
        <end position="176"/>
    </location>
</feature>
<feature type="topological domain" description="Extracellular" evidence="1">
    <location>
        <begin position="177"/>
        <end position="207"/>
    </location>
</feature>
<feature type="transmembrane region" description="Helical" evidence="5">
    <location>
        <begin position="208"/>
        <end position="228"/>
    </location>
</feature>
<feature type="topological domain" description="Cytoplasmic" evidence="1">
    <location>
        <begin position="229"/>
        <end position="382"/>
    </location>
</feature>
<feature type="region of interest" description="Interaction with NOV" evidence="1">
    <location>
        <begin position="244"/>
        <end position="382"/>
    </location>
</feature>
<feature type="region of interest" description="Interaction with UBQLN4" evidence="3">
    <location>
        <begin position="264"/>
        <end position="382"/>
    </location>
</feature>
<feature type="region of interest" description="Disordered" evidence="6">
    <location>
        <begin position="317"/>
        <end position="382"/>
    </location>
</feature>
<feature type="compositionally biased region" description="Polar residues" evidence="6">
    <location>
        <begin position="317"/>
        <end position="332"/>
    </location>
</feature>
<feature type="compositionally biased region" description="Low complexity" evidence="6">
    <location>
        <begin position="362"/>
        <end position="374"/>
    </location>
</feature>
<feature type="modified residue" description="Phosphoserine" evidence="1">
    <location>
        <position position="5"/>
    </location>
</feature>
<feature type="modified residue" description="Phosphotyrosine" evidence="3">
    <location>
        <position position="247"/>
    </location>
</feature>
<feature type="modified residue" description="Phosphoserine" evidence="2">
    <location>
        <position position="255"/>
    </location>
</feature>
<feature type="modified residue" description="Phosphoserine" evidence="1">
    <location>
        <position position="257"/>
    </location>
</feature>
<feature type="modified residue" description="Phosphoserine" evidence="2">
    <location>
        <position position="262"/>
    </location>
</feature>
<feature type="modified residue" description="S-nitrosocysteine" evidence="3">
    <location>
        <position position="271"/>
    </location>
</feature>
<feature type="modified residue" description="Phosphothreonine" evidence="3">
    <location>
        <position position="275"/>
    </location>
</feature>
<feature type="modified residue" description="Phosphoserine" evidence="3">
    <location>
        <position position="306"/>
    </location>
</feature>
<feature type="modified residue" description="Phosphoserine" evidence="2">
    <location>
        <position position="314"/>
    </location>
</feature>
<feature type="modified residue" description="Phosphoserine; by CK1" evidence="2">
    <location>
        <position position="325"/>
    </location>
</feature>
<feature type="modified residue" description="Phosphothreonine" evidence="3">
    <location>
        <position position="326"/>
    </location>
</feature>
<feature type="modified residue" description="Phosphoserine; by CK1" evidence="2">
    <location>
        <position position="328"/>
    </location>
</feature>
<feature type="modified residue" description="Phosphoserine; by CK1" evidence="2">
    <location>
        <position position="330"/>
    </location>
</feature>
<feature type="modified residue" description="Phosphoserine" evidence="2">
    <location>
        <position position="344"/>
    </location>
</feature>
<feature type="modified residue" description="Phosphoserine" evidence="3">
    <location>
        <position position="365"/>
    </location>
</feature>
<feature type="modified residue" description="Phosphoserine; by PKC/PRKCG and PKC/PRKCD" evidence="3">
    <location>
        <position position="368"/>
    </location>
</feature>
<feature type="modified residue" description="Phosphoserine" evidence="3">
    <location>
        <position position="369"/>
    </location>
</feature>
<feature type="modified residue" description="Phosphoserine" evidence="1">
    <location>
        <position position="373"/>
    </location>
</feature>
<feature type="disulfide bond" evidence="2">
    <location>
        <begin position="54"/>
        <end position="192"/>
    </location>
</feature>
<feature type="disulfide bond" evidence="2">
    <location>
        <begin position="187"/>
        <end position="198"/>
    </location>
</feature>
<feature type="cross-link" description="Glycyl lysine isopeptide (Lys-Gly) (interchain with G-Cter in SUMO)" evidence="2">
    <location>
        <position position="144"/>
    </location>
</feature>
<feature type="cross-link" description="Glycyl lysine isopeptide (Lys-Gly) (interchain with G-Cter in SUMO)" evidence="2">
    <location>
        <position position="237"/>
    </location>
</feature>
<keyword id="KW-0007">Acetylation</keyword>
<keyword id="KW-0965">Cell junction</keyword>
<keyword id="KW-1003">Cell membrane</keyword>
<keyword id="KW-1015">Disulfide bond</keyword>
<keyword id="KW-0256">Endoplasmic reticulum</keyword>
<keyword id="KW-0303">Gap junction</keyword>
<keyword id="KW-1017">Isopeptide bond</keyword>
<keyword id="KW-0472">Membrane</keyword>
<keyword id="KW-0597">Phosphoprotein</keyword>
<keyword id="KW-1185">Reference proteome</keyword>
<keyword id="KW-0702">S-nitrosylation</keyword>
<keyword id="KW-0812">Transmembrane</keyword>
<keyword id="KW-1133">Transmembrane helix</keyword>
<keyword id="KW-0832">Ubl conjugation</keyword>